<organism>
    <name type="scientific">Streptomyces coelicolor (strain ATCC BAA-471 / A3(2) / M145)</name>
    <dbReference type="NCBI Taxonomy" id="100226"/>
    <lineage>
        <taxon>Bacteria</taxon>
        <taxon>Bacillati</taxon>
        <taxon>Actinomycetota</taxon>
        <taxon>Actinomycetes</taxon>
        <taxon>Kitasatosporales</taxon>
        <taxon>Streptomycetaceae</taxon>
        <taxon>Streptomyces</taxon>
        <taxon>Streptomyces albidoflavus group</taxon>
    </lineage>
</organism>
<comment type="function">
    <text evidence="7">Part of the ABC transporter complex DasABC-MsiK involved in N,N'-diacetylchitobiose ((GlcNAc)2) uptake. Responsible for the translocation of the substrate across the membrane.</text>
</comment>
<comment type="subunit">
    <text evidence="8">The complex is composed of two ATP-binding proteins (MsiK), two transmembrane proteins (DasB and DasC) and a solute-binding protein (DasA).</text>
</comment>
<comment type="subcellular location">
    <subcellularLocation>
        <location evidence="6">Cell membrane</location>
        <topology evidence="1">Multi-pass membrane protein</topology>
    </subcellularLocation>
</comment>
<comment type="induction">
    <text evidence="4">Induced by (GlcNAc)2 and (GlcNAc)3.</text>
</comment>
<comment type="similarity">
    <text evidence="6">Belongs to the binding-protein-dependent transport system permease family.</text>
</comment>
<reference key="1">
    <citation type="journal article" date="2002" name="Nature">
        <title>Complete genome sequence of the model actinomycete Streptomyces coelicolor A3(2).</title>
        <authorList>
            <person name="Bentley S.D."/>
            <person name="Chater K.F."/>
            <person name="Cerdeno-Tarraga A.-M."/>
            <person name="Challis G.L."/>
            <person name="Thomson N.R."/>
            <person name="James K.D."/>
            <person name="Harris D.E."/>
            <person name="Quail M.A."/>
            <person name="Kieser H."/>
            <person name="Harper D."/>
            <person name="Bateman A."/>
            <person name="Brown S."/>
            <person name="Chandra G."/>
            <person name="Chen C.W."/>
            <person name="Collins M."/>
            <person name="Cronin A."/>
            <person name="Fraser A."/>
            <person name="Goble A."/>
            <person name="Hidalgo J."/>
            <person name="Hornsby T."/>
            <person name="Howarth S."/>
            <person name="Huang C.-H."/>
            <person name="Kieser T."/>
            <person name="Larke L."/>
            <person name="Murphy L.D."/>
            <person name="Oliver K."/>
            <person name="O'Neil S."/>
            <person name="Rabbinowitsch E."/>
            <person name="Rajandream M.A."/>
            <person name="Rutherford K.M."/>
            <person name="Rutter S."/>
            <person name="Seeger K."/>
            <person name="Saunders D."/>
            <person name="Sharp S."/>
            <person name="Squares R."/>
            <person name="Squares S."/>
            <person name="Taylor K."/>
            <person name="Warren T."/>
            <person name="Wietzorrek A."/>
            <person name="Woodward J.R."/>
            <person name="Barrell B.G."/>
            <person name="Parkhill J."/>
            <person name="Hopwood D.A."/>
        </authorList>
    </citation>
    <scope>NUCLEOTIDE SEQUENCE [LARGE SCALE GENOMIC DNA]</scope>
    <source>
        <strain>ATCC BAA-471 / A3(2) / M145</strain>
    </source>
</reference>
<reference key="2">
    <citation type="journal article" date="2007" name="Appl. Environ. Microbiol.">
        <title>The dasABC gene cluster, adjacent to dasR, encodes a novel ABC transporter for the uptake of N,N'-diacetylchitobiose in Streptomyces coelicolor A3(2).</title>
        <authorList>
            <person name="Saito A."/>
            <person name="Shinya T."/>
            <person name="Miyamoto K."/>
            <person name="Yokoyama T."/>
            <person name="Kaku H."/>
            <person name="Minami E."/>
            <person name="Shibuya N."/>
            <person name="Tsujibo H."/>
            <person name="Nagata Y."/>
            <person name="Ando A."/>
            <person name="Fujii T."/>
            <person name="Miyashita K."/>
        </authorList>
    </citation>
    <scope>FUNCTION</scope>
    <scope>INDUCTION</scope>
    <source>
        <strain>ATCC BAA-471 / A3(2) / M145</strain>
    </source>
</reference>
<reference key="3">
    <citation type="journal article" date="2008" name="Microbiology">
        <title>The msiK gene, encoding the ATP-hydrolysing component of N,N'-diacetylchitobiose ABC transporters, is essential for induction of chitinase production in Streptomyces coelicolor A3(2).</title>
        <authorList>
            <person name="Saito A."/>
            <person name="Fujii T."/>
            <person name="Shinya T."/>
            <person name="Shibuya N."/>
            <person name="Ando A."/>
            <person name="Miyashita K."/>
        </authorList>
    </citation>
    <scope>SUBUNIT</scope>
    <source>
        <strain>ATCC BAA-471 / A3(2) / M145</strain>
    </source>
</reference>
<name>DASB_STRCO</name>
<gene>
    <name evidence="5" type="primary">dasB</name>
    <name evidence="9" type="ordered locus">SCO5233</name>
</gene>
<dbReference type="EMBL" id="AL939123">
    <property type="protein sequence ID" value="CAB94618.1"/>
    <property type="molecule type" value="Genomic_DNA"/>
</dbReference>
<dbReference type="RefSeq" id="NP_629380.1">
    <property type="nucleotide sequence ID" value="NC_003888.3"/>
</dbReference>
<dbReference type="RefSeq" id="WP_003973738.1">
    <property type="nucleotide sequence ID" value="NZ_VNID01000008.1"/>
</dbReference>
<dbReference type="SMR" id="Q9K490"/>
<dbReference type="STRING" id="100226.gene:17762884"/>
<dbReference type="PaxDb" id="100226-SCO5233"/>
<dbReference type="KEGG" id="sco:SCO5233"/>
<dbReference type="PATRIC" id="fig|100226.15.peg.5316"/>
<dbReference type="eggNOG" id="COG1175">
    <property type="taxonomic scope" value="Bacteria"/>
</dbReference>
<dbReference type="HOGENOM" id="CLU_016047_0_3_11"/>
<dbReference type="InParanoid" id="Q9K490"/>
<dbReference type="OrthoDB" id="9804439at2"/>
<dbReference type="PhylomeDB" id="Q9K490"/>
<dbReference type="Proteomes" id="UP000001973">
    <property type="component" value="Chromosome"/>
</dbReference>
<dbReference type="GO" id="GO:0005886">
    <property type="term" value="C:plasma membrane"/>
    <property type="evidence" value="ECO:0007669"/>
    <property type="project" value="UniProtKB-SubCell"/>
</dbReference>
<dbReference type="GO" id="GO:0055085">
    <property type="term" value="P:transmembrane transport"/>
    <property type="evidence" value="ECO:0007669"/>
    <property type="project" value="InterPro"/>
</dbReference>
<dbReference type="CDD" id="cd06261">
    <property type="entry name" value="TM_PBP2"/>
    <property type="match status" value="1"/>
</dbReference>
<dbReference type="Gene3D" id="1.10.3720.10">
    <property type="entry name" value="MetI-like"/>
    <property type="match status" value="1"/>
</dbReference>
<dbReference type="InterPro" id="IPR000515">
    <property type="entry name" value="MetI-like"/>
</dbReference>
<dbReference type="InterPro" id="IPR035906">
    <property type="entry name" value="MetI-like_sf"/>
</dbReference>
<dbReference type="InterPro" id="IPR050809">
    <property type="entry name" value="UgpAE/MalFG_permease"/>
</dbReference>
<dbReference type="PANTHER" id="PTHR43227">
    <property type="entry name" value="BLL4140 PROTEIN"/>
    <property type="match status" value="1"/>
</dbReference>
<dbReference type="PANTHER" id="PTHR43227:SF8">
    <property type="entry name" value="DIACETYLCHITOBIOSE UPTAKE SYSTEM PERMEASE PROTEIN DASB"/>
    <property type="match status" value="1"/>
</dbReference>
<dbReference type="Pfam" id="PF00528">
    <property type="entry name" value="BPD_transp_1"/>
    <property type="match status" value="1"/>
</dbReference>
<dbReference type="SUPFAM" id="SSF161098">
    <property type="entry name" value="MetI-like"/>
    <property type="match status" value="1"/>
</dbReference>
<dbReference type="PROSITE" id="PS50928">
    <property type="entry name" value="ABC_TM1"/>
    <property type="match status" value="1"/>
</dbReference>
<feature type="chain" id="PRO_0000447874" description="Diacetylchitobiose uptake system permease protein DasB">
    <location>
        <begin position="1"/>
        <end position="328"/>
    </location>
</feature>
<feature type="transmembrane region" description="Helical" evidence="1">
    <location>
        <begin position="36"/>
        <end position="56"/>
    </location>
</feature>
<feature type="transmembrane region" description="Helical" evidence="1">
    <location>
        <begin position="104"/>
        <end position="124"/>
    </location>
</feature>
<feature type="transmembrane region" description="Helical" evidence="1">
    <location>
        <begin position="134"/>
        <end position="154"/>
    </location>
</feature>
<feature type="transmembrane region" description="Helical" evidence="1">
    <location>
        <begin position="188"/>
        <end position="208"/>
    </location>
</feature>
<feature type="transmembrane region" description="Helical" evidence="1">
    <location>
        <begin position="247"/>
        <end position="267"/>
    </location>
</feature>
<feature type="transmembrane region" description="Helical" evidence="1">
    <location>
        <begin position="297"/>
        <end position="317"/>
    </location>
</feature>
<feature type="domain" description="ABC transmembrane type-1" evidence="2">
    <location>
        <begin position="100"/>
        <end position="316"/>
    </location>
</feature>
<feature type="region of interest" description="Disordered" evidence="3">
    <location>
        <begin position="1"/>
        <end position="27"/>
    </location>
</feature>
<accession>Q9K490</accession>
<sequence length="328" mass="36132">MTVQTERPPSGPSDVRKADGGGTGGTRARAASRAGALAPYLLLLPAAAATVLLLGWPLVKDGLLSFQNLNMAQLIQHVTEWTGFDNYKEVLTGEDFWRVTVRSIIFTAVNVVLTMVVGGLIGLLLARLGRVMRFVLMIGLVLAWAMPVVAATTVYQWLFAQRFGVVNWVLDKLGWHSMADFSWTGSQFSTFFVVTVLIVWMSVPFVAINLYAATTTIPDELYEAAALDGAGMWRSFTSVTLPFLRPFLYATTFLEVIWIFKAFVQVYTFNGGGPDRLTEILPVYAYIEGVGNQHYGMGAAIAVLTILILLGLTAYYLRIVLKQEEDEL</sequence>
<proteinExistence type="evidence at protein level"/>
<protein>
    <recommendedName>
        <fullName evidence="6">Diacetylchitobiose uptake system permease protein DasB</fullName>
    </recommendedName>
</protein>
<keyword id="KW-1003">Cell membrane</keyword>
<keyword id="KW-0472">Membrane</keyword>
<keyword id="KW-1185">Reference proteome</keyword>
<keyword id="KW-0762">Sugar transport</keyword>
<keyword id="KW-0812">Transmembrane</keyword>
<keyword id="KW-1133">Transmembrane helix</keyword>
<keyword id="KW-0813">Transport</keyword>
<evidence type="ECO:0000255" key="1"/>
<evidence type="ECO:0000255" key="2">
    <source>
        <dbReference type="PROSITE-ProRule" id="PRU00441"/>
    </source>
</evidence>
<evidence type="ECO:0000256" key="3">
    <source>
        <dbReference type="SAM" id="MobiDB-lite"/>
    </source>
</evidence>
<evidence type="ECO:0000269" key="4">
    <source>
    </source>
</evidence>
<evidence type="ECO:0000303" key="5">
    <source>
    </source>
</evidence>
<evidence type="ECO:0000305" key="6"/>
<evidence type="ECO:0000305" key="7">
    <source>
    </source>
</evidence>
<evidence type="ECO:0000305" key="8">
    <source>
    </source>
</evidence>
<evidence type="ECO:0000312" key="9">
    <source>
        <dbReference type="EMBL" id="CAB94618.1"/>
    </source>
</evidence>